<accession>Q6V9H4</accession>
<gene>
    <name type="primary">PDGFD</name>
    <name type="synonym">IEGF</name>
</gene>
<feature type="chain" id="PRO_0000250194" description="Platelet-derived growth factor D, latent form">
    <location>
        <begin position="1" status="less than"/>
        <end position="300" status="greater than"/>
    </location>
</feature>
<feature type="chain" id="PRO_0000250195" description="Platelet-derived growth factor D, receptor-binding form" evidence="2">
    <location>
        <begin position="194"/>
        <end position="300" status="greater than"/>
    </location>
</feature>
<feature type="domain" description="CUB" evidence="3">
    <location>
        <begin position="1" status="less than"/>
        <end position="114"/>
    </location>
</feature>
<feature type="site" description="Cleavage" evidence="2">
    <location>
        <begin position="191"/>
        <end position="192"/>
    </location>
</feature>
<feature type="site" description="Cleavage" evidence="2">
    <location>
        <begin position="193"/>
        <end position="194"/>
    </location>
</feature>
<feature type="glycosylation site" description="N-linked (GlcNAc...) asparagine" evidence="2">
    <location>
        <position position="220"/>
    </location>
</feature>
<feature type="disulfide bond" evidence="3">
    <location>
        <begin position="53"/>
        <end position="75"/>
    </location>
</feature>
<feature type="disulfide bond" description="Interchain" evidence="3">
    <location>
        <position position="240"/>
    </location>
</feature>
<feature type="non-terminal residue">
    <location>
        <position position="1"/>
    </location>
</feature>
<feature type="non-terminal residue">
    <location>
        <position position="300"/>
    </location>
</feature>
<proteinExistence type="evidence at transcript level"/>
<name>PDGFD_RABIT</name>
<organism>
    <name type="scientific">Oryctolagus cuniculus</name>
    <name type="common">Rabbit</name>
    <dbReference type="NCBI Taxonomy" id="9986"/>
    <lineage>
        <taxon>Eukaryota</taxon>
        <taxon>Metazoa</taxon>
        <taxon>Chordata</taxon>
        <taxon>Craniata</taxon>
        <taxon>Vertebrata</taxon>
        <taxon>Euteleostomi</taxon>
        <taxon>Mammalia</taxon>
        <taxon>Eutheria</taxon>
        <taxon>Euarchontoglires</taxon>
        <taxon>Glires</taxon>
        <taxon>Lagomorpha</taxon>
        <taxon>Leporidae</taxon>
        <taxon>Oryctolagus</taxon>
    </lineage>
</organism>
<dbReference type="EMBL" id="AY347260">
    <property type="protein sequence ID" value="AAQ24382.1"/>
    <property type="molecule type" value="mRNA"/>
</dbReference>
<dbReference type="SMR" id="Q6V9H4"/>
<dbReference type="STRING" id="9986.ENSOCUP00000013155"/>
<dbReference type="GlyCosmos" id="Q6V9H4">
    <property type="glycosylation" value="1 site, No reported glycans"/>
</dbReference>
<dbReference type="PaxDb" id="9986-ENSOCUP00000013155"/>
<dbReference type="eggNOG" id="ENOG502QPQY">
    <property type="taxonomic scope" value="Eukaryota"/>
</dbReference>
<dbReference type="InParanoid" id="Q6V9H4"/>
<dbReference type="Proteomes" id="UP000001811">
    <property type="component" value="Unplaced"/>
</dbReference>
<dbReference type="GO" id="GO:0005615">
    <property type="term" value="C:extracellular space"/>
    <property type="evidence" value="ECO:0007669"/>
    <property type="project" value="TreeGrafter"/>
</dbReference>
<dbReference type="GO" id="GO:0016020">
    <property type="term" value="C:membrane"/>
    <property type="evidence" value="ECO:0007669"/>
    <property type="project" value="InterPro"/>
</dbReference>
<dbReference type="GO" id="GO:0008083">
    <property type="term" value="F:growth factor activity"/>
    <property type="evidence" value="ECO:0007669"/>
    <property type="project" value="UniProtKB-KW"/>
</dbReference>
<dbReference type="GO" id="GO:0005161">
    <property type="term" value="F:platelet-derived growth factor receptor binding"/>
    <property type="evidence" value="ECO:0007669"/>
    <property type="project" value="TreeGrafter"/>
</dbReference>
<dbReference type="GO" id="GO:0048008">
    <property type="term" value="P:platelet-derived growth factor receptor signaling pathway"/>
    <property type="evidence" value="ECO:0007669"/>
    <property type="project" value="TreeGrafter"/>
</dbReference>
<dbReference type="GO" id="GO:0051781">
    <property type="term" value="P:positive regulation of cell division"/>
    <property type="evidence" value="ECO:0007669"/>
    <property type="project" value="UniProtKB-KW"/>
</dbReference>
<dbReference type="GO" id="GO:0030335">
    <property type="term" value="P:positive regulation of cell migration"/>
    <property type="evidence" value="ECO:0007669"/>
    <property type="project" value="TreeGrafter"/>
</dbReference>
<dbReference type="GO" id="GO:0008284">
    <property type="term" value="P:positive regulation of cell population proliferation"/>
    <property type="evidence" value="ECO:0007669"/>
    <property type="project" value="TreeGrafter"/>
</dbReference>
<dbReference type="GO" id="GO:0070374">
    <property type="term" value="P:positive regulation of ERK1 and ERK2 cascade"/>
    <property type="evidence" value="ECO:0007669"/>
    <property type="project" value="TreeGrafter"/>
</dbReference>
<dbReference type="GO" id="GO:0051897">
    <property type="term" value="P:positive regulation of phosphatidylinositol 3-kinase/protein kinase B signal transduction"/>
    <property type="evidence" value="ECO:0007669"/>
    <property type="project" value="TreeGrafter"/>
</dbReference>
<dbReference type="CDD" id="cd00041">
    <property type="entry name" value="CUB"/>
    <property type="match status" value="1"/>
</dbReference>
<dbReference type="CDD" id="cd00135">
    <property type="entry name" value="PDGF"/>
    <property type="match status" value="1"/>
</dbReference>
<dbReference type="FunFam" id="2.10.90.10:FF:000010">
    <property type="entry name" value="Platelet derived growth factor C"/>
    <property type="match status" value="1"/>
</dbReference>
<dbReference type="FunFam" id="2.60.120.290:FF:000017">
    <property type="entry name" value="Platelet derived growth factor C"/>
    <property type="match status" value="1"/>
</dbReference>
<dbReference type="Gene3D" id="2.10.90.10">
    <property type="entry name" value="Cystine-knot cytokines"/>
    <property type="match status" value="1"/>
</dbReference>
<dbReference type="Gene3D" id="2.60.120.290">
    <property type="entry name" value="Spermadhesin, CUB domain"/>
    <property type="match status" value="1"/>
</dbReference>
<dbReference type="InterPro" id="IPR000859">
    <property type="entry name" value="CUB_dom"/>
</dbReference>
<dbReference type="InterPro" id="IPR029034">
    <property type="entry name" value="Cystine-knot_cytokine"/>
</dbReference>
<dbReference type="InterPro" id="IPR000072">
    <property type="entry name" value="PDGF/VEGF_dom"/>
</dbReference>
<dbReference type="InterPro" id="IPR035914">
    <property type="entry name" value="Sperma_CUB_dom_sf"/>
</dbReference>
<dbReference type="PANTHER" id="PTHR11633">
    <property type="entry name" value="PLATELET-DERIVED GROWTH FACTOR"/>
    <property type="match status" value="1"/>
</dbReference>
<dbReference type="PANTHER" id="PTHR11633:SF4">
    <property type="entry name" value="PLATELET-DERIVED GROWTH FACTOR D"/>
    <property type="match status" value="1"/>
</dbReference>
<dbReference type="Pfam" id="PF00431">
    <property type="entry name" value="CUB"/>
    <property type="match status" value="1"/>
</dbReference>
<dbReference type="Pfam" id="PF00341">
    <property type="entry name" value="PDGF"/>
    <property type="match status" value="1"/>
</dbReference>
<dbReference type="SMART" id="SM00042">
    <property type="entry name" value="CUB"/>
    <property type="match status" value="1"/>
</dbReference>
<dbReference type="SUPFAM" id="SSF57501">
    <property type="entry name" value="Cystine-knot cytokines"/>
    <property type="match status" value="1"/>
</dbReference>
<dbReference type="SUPFAM" id="SSF49854">
    <property type="entry name" value="Spermadhesin, CUB domain"/>
    <property type="match status" value="1"/>
</dbReference>
<dbReference type="PROSITE" id="PS01180">
    <property type="entry name" value="CUB"/>
    <property type="match status" value="1"/>
</dbReference>
<dbReference type="PROSITE" id="PS50278">
    <property type="entry name" value="PDGF_2"/>
    <property type="match status" value="1"/>
</dbReference>
<comment type="function">
    <text evidence="1">Growth factor that plays an essential role in the regulation of embryonic development, cell proliferation, cell migration, survival and chemotaxis. Potent mitogen for cells of mesenchymal origin. Plays an important role in wound healing. Induces macrophage recruitment, increased interstitial pressure, and blood vessel maturation during angiogenesis. Can initiate events that lead to a mesangial proliferative glomerulonephritis, including influx of monocytes and macrophages and production of extracellular matrix (By similarity).</text>
</comment>
<comment type="subunit">
    <text evidence="1">Homodimer; disulfide-linked. Interacts with PDGFRB homodimers, and with heterodimers formed by PDGFRA and PDGFRB (By similarity).</text>
</comment>
<comment type="subcellular location">
    <subcellularLocation>
        <location evidence="1">Secreted</location>
    </subcellularLocation>
    <text evidence="1">Released by platelets upon wounding.</text>
</comment>
<comment type="PTM">
    <text evidence="1">Activated by proteolytic cleavage. Proteolytic removal of the N-terminal CUB domain releasing the core domain is necessary for unmasking the receptor-binding epitopes of the core domain. Cleavage after Arg-191 or Arg-193 by urokinase plasminogen activator gives rise to the active form (By similarity).</text>
</comment>
<comment type="similarity">
    <text evidence="4">Belongs to the PDGF/VEGF growth factor family.</text>
</comment>
<reference key="1">
    <citation type="journal article" date="2005" name="J. Biol. Chem.">
        <title>Platelet-derived growth factor D, tissue-specific expression in the eye, and a key role in control of lens epithelial cell proliferation.</title>
        <authorList>
            <person name="Ray S."/>
            <person name="Gao C."/>
            <person name="Wyatt K."/>
            <person name="Fariss R.N."/>
            <person name="Bundek A."/>
            <person name="Zelenka P."/>
            <person name="Wistow G."/>
        </authorList>
    </citation>
    <scope>NUCLEOTIDE SEQUENCE [MRNA]</scope>
</reference>
<evidence type="ECO:0000250" key="1"/>
<evidence type="ECO:0000255" key="2"/>
<evidence type="ECO:0000255" key="3">
    <source>
        <dbReference type="PROSITE-ProRule" id="PRU00059"/>
    </source>
</evidence>
<evidence type="ECO:0000305" key="4"/>
<keyword id="KW-0165">Cleavage on pair of basic residues</keyword>
<keyword id="KW-0217">Developmental protein</keyword>
<keyword id="KW-1015">Disulfide bond</keyword>
<keyword id="KW-0325">Glycoprotein</keyword>
<keyword id="KW-0339">Growth factor</keyword>
<keyword id="KW-0497">Mitogen</keyword>
<keyword id="KW-1185">Reference proteome</keyword>
<keyword id="KW-0964">Secreted</keyword>
<sequence length="300" mass="34616">QVTGNGHVQSLAFPNSYPRNLLLTWRLHSQEKTRIQLAFDHQFGLEEAENDICRYDFVEVEDISETSTVIRGRWCGHKEVPPRITSRTNQIKITFKSDDYFVAKPGFKIYYSFVEDFQPAAASETNWESVTSSISGVSYHNPSVTDPTLTADALDKTIAEFDTVEDLLKHFNPESWQEDLENLYLDTPHYRGRSYHDRKSKVDLDRLNDDAKRYSCTPRNYSVNLREELKLTNVVFFPRCLLVQRCGGNCGCGTVNWKSCTCSSGKTVKKYHEVLKFEPGHFKRRNRAKNMALVDIQLDH</sequence>
<protein>
    <recommendedName>
        <fullName>Platelet-derived growth factor D</fullName>
        <shortName>PDGF-D</shortName>
    </recommendedName>
    <alternativeName>
        <fullName>Iris-expressed growth factor</fullName>
    </alternativeName>
    <component>
        <recommendedName>
            <fullName>Platelet-derived growth factor D, latent form</fullName>
            <shortName>PDGFD latent form</shortName>
        </recommendedName>
    </component>
    <component>
        <recommendedName>
            <fullName>Platelet-derived growth factor D, receptor-binding form</fullName>
            <shortName>PDGFD receptor-binding form</shortName>
        </recommendedName>
    </component>
</protein>